<dbReference type="EC" id="1.1.1.290" evidence="1"/>
<dbReference type="EMBL" id="CP000946">
    <property type="protein sequence ID" value="ACA76998.1"/>
    <property type="molecule type" value="Genomic_DNA"/>
</dbReference>
<dbReference type="RefSeq" id="WP_000699145.1">
    <property type="nucleotide sequence ID" value="NZ_MTFT01000028.1"/>
</dbReference>
<dbReference type="SMR" id="B1IXM2"/>
<dbReference type="KEGG" id="ecl:EcolC_1332"/>
<dbReference type="HOGENOM" id="CLU_019796_4_0_6"/>
<dbReference type="UniPathway" id="UPA00244">
    <property type="reaction ID" value="UER00310"/>
</dbReference>
<dbReference type="GO" id="GO:0005829">
    <property type="term" value="C:cytosol"/>
    <property type="evidence" value="ECO:0007669"/>
    <property type="project" value="TreeGrafter"/>
</dbReference>
<dbReference type="GO" id="GO:0033711">
    <property type="term" value="F:4-phosphoerythronate dehydrogenase activity"/>
    <property type="evidence" value="ECO:0007669"/>
    <property type="project" value="UniProtKB-EC"/>
</dbReference>
<dbReference type="GO" id="GO:0051287">
    <property type="term" value="F:NAD binding"/>
    <property type="evidence" value="ECO:0007669"/>
    <property type="project" value="InterPro"/>
</dbReference>
<dbReference type="GO" id="GO:0046983">
    <property type="term" value="F:protein dimerization activity"/>
    <property type="evidence" value="ECO:0007669"/>
    <property type="project" value="InterPro"/>
</dbReference>
<dbReference type="GO" id="GO:0036001">
    <property type="term" value="P:'de novo' pyridoxal 5'-phosphate biosynthetic process"/>
    <property type="evidence" value="ECO:0007669"/>
    <property type="project" value="TreeGrafter"/>
</dbReference>
<dbReference type="GO" id="GO:0008615">
    <property type="term" value="P:pyridoxine biosynthetic process"/>
    <property type="evidence" value="ECO:0007669"/>
    <property type="project" value="UniProtKB-UniRule"/>
</dbReference>
<dbReference type="CDD" id="cd12158">
    <property type="entry name" value="ErythrP_dh"/>
    <property type="match status" value="1"/>
</dbReference>
<dbReference type="FunFam" id="3.30.1370.170:FF:000001">
    <property type="entry name" value="Erythronate-4-phosphate dehydrogenase"/>
    <property type="match status" value="1"/>
</dbReference>
<dbReference type="FunFam" id="3.40.50.720:FF:000093">
    <property type="entry name" value="Erythronate-4-phosphate dehydrogenase"/>
    <property type="match status" value="1"/>
</dbReference>
<dbReference type="Gene3D" id="3.30.1370.170">
    <property type="match status" value="1"/>
</dbReference>
<dbReference type="Gene3D" id="3.40.50.720">
    <property type="entry name" value="NAD(P)-binding Rossmann-like Domain"/>
    <property type="match status" value="2"/>
</dbReference>
<dbReference type="HAMAP" id="MF_01825">
    <property type="entry name" value="PdxB"/>
    <property type="match status" value="1"/>
</dbReference>
<dbReference type="InterPro" id="IPR006139">
    <property type="entry name" value="D-isomer_2_OHA_DH_cat_dom"/>
</dbReference>
<dbReference type="InterPro" id="IPR029753">
    <property type="entry name" value="D-isomer_DH_CS"/>
</dbReference>
<dbReference type="InterPro" id="IPR029752">
    <property type="entry name" value="D-isomer_DH_CS1"/>
</dbReference>
<dbReference type="InterPro" id="IPR006140">
    <property type="entry name" value="D-isomer_DH_NAD-bd"/>
</dbReference>
<dbReference type="InterPro" id="IPR020921">
    <property type="entry name" value="Erythronate-4-P_DHase"/>
</dbReference>
<dbReference type="InterPro" id="IPR024531">
    <property type="entry name" value="Erythronate-4-P_DHase_dimer"/>
</dbReference>
<dbReference type="InterPro" id="IPR036291">
    <property type="entry name" value="NAD(P)-bd_dom_sf"/>
</dbReference>
<dbReference type="InterPro" id="IPR038251">
    <property type="entry name" value="PdxB_dimer_sf"/>
</dbReference>
<dbReference type="NCBIfam" id="NF001309">
    <property type="entry name" value="PRK00257.1"/>
    <property type="match status" value="1"/>
</dbReference>
<dbReference type="NCBIfam" id="NF011966">
    <property type="entry name" value="PRK15438.1"/>
    <property type="match status" value="1"/>
</dbReference>
<dbReference type="PANTHER" id="PTHR42938">
    <property type="entry name" value="FORMATE DEHYDROGENASE 1"/>
    <property type="match status" value="1"/>
</dbReference>
<dbReference type="PANTHER" id="PTHR42938:SF9">
    <property type="entry name" value="FORMATE DEHYDROGENASE 1"/>
    <property type="match status" value="1"/>
</dbReference>
<dbReference type="Pfam" id="PF00389">
    <property type="entry name" value="2-Hacid_dh"/>
    <property type="match status" value="1"/>
</dbReference>
<dbReference type="Pfam" id="PF02826">
    <property type="entry name" value="2-Hacid_dh_C"/>
    <property type="match status" value="1"/>
</dbReference>
<dbReference type="Pfam" id="PF11890">
    <property type="entry name" value="DUF3410"/>
    <property type="match status" value="1"/>
</dbReference>
<dbReference type="SUPFAM" id="SSF52283">
    <property type="entry name" value="Formate/glycerate dehydrogenase catalytic domain-like"/>
    <property type="match status" value="1"/>
</dbReference>
<dbReference type="SUPFAM" id="SSF51735">
    <property type="entry name" value="NAD(P)-binding Rossmann-fold domains"/>
    <property type="match status" value="1"/>
</dbReference>
<dbReference type="PROSITE" id="PS00065">
    <property type="entry name" value="D_2_HYDROXYACID_DH_1"/>
    <property type="match status" value="1"/>
</dbReference>
<dbReference type="PROSITE" id="PS00671">
    <property type="entry name" value="D_2_HYDROXYACID_DH_3"/>
    <property type="match status" value="1"/>
</dbReference>
<gene>
    <name evidence="1" type="primary">pdxB</name>
    <name type="ordered locus">EcolC_1332</name>
</gene>
<keyword id="KW-0963">Cytoplasm</keyword>
<keyword id="KW-0520">NAD</keyword>
<keyword id="KW-0560">Oxidoreductase</keyword>
<keyword id="KW-0664">Pyridoxine biosynthesis</keyword>
<organism>
    <name type="scientific">Escherichia coli (strain ATCC 8739 / DSM 1576 / NBRC 3972 / NCIMB 8545 / WDCM 00012 / Crooks)</name>
    <dbReference type="NCBI Taxonomy" id="481805"/>
    <lineage>
        <taxon>Bacteria</taxon>
        <taxon>Pseudomonadati</taxon>
        <taxon>Pseudomonadota</taxon>
        <taxon>Gammaproteobacteria</taxon>
        <taxon>Enterobacterales</taxon>
        <taxon>Enterobacteriaceae</taxon>
        <taxon>Escherichia</taxon>
    </lineage>
</organism>
<comment type="function">
    <text evidence="1">Catalyzes the oxidation of erythronate-4-phosphate to 3-hydroxy-2-oxo-4-phosphonooxybutanoate.</text>
</comment>
<comment type="catalytic activity">
    <reaction evidence="1">
        <text>4-phospho-D-erythronate + NAD(+) = (R)-3-hydroxy-2-oxo-4-phosphooxybutanoate + NADH + H(+)</text>
        <dbReference type="Rhea" id="RHEA:18829"/>
        <dbReference type="ChEBI" id="CHEBI:15378"/>
        <dbReference type="ChEBI" id="CHEBI:57540"/>
        <dbReference type="ChEBI" id="CHEBI:57945"/>
        <dbReference type="ChEBI" id="CHEBI:58538"/>
        <dbReference type="ChEBI" id="CHEBI:58766"/>
        <dbReference type="EC" id="1.1.1.290"/>
    </reaction>
</comment>
<comment type="pathway">
    <text evidence="1">Cofactor biosynthesis; pyridoxine 5'-phosphate biosynthesis; pyridoxine 5'-phosphate from D-erythrose 4-phosphate: step 2/5.</text>
</comment>
<comment type="subunit">
    <text evidence="1">Homodimer.</text>
</comment>
<comment type="subcellular location">
    <subcellularLocation>
        <location evidence="1">Cytoplasm</location>
    </subcellularLocation>
</comment>
<comment type="similarity">
    <text evidence="1">Belongs to the D-isomer specific 2-hydroxyacid dehydrogenase family. PdxB subfamily.</text>
</comment>
<protein>
    <recommendedName>
        <fullName evidence="1">Erythronate-4-phosphate dehydrogenase</fullName>
        <ecNumber evidence="1">1.1.1.290</ecNumber>
    </recommendedName>
</protein>
<feature type="chain" id="PRO_1000088419" description="Erythronate-4-phosphate dehydrogenase">
    <location>
        <begin position="1"/>
        <end position="378"/>
    </location>
</feature>
<feature type="active site" evidence="1">
    <location>
        <position position="208"/>
    </location>
</feature>
<feature type="active site" evidence="1">
    <location>
        <position position="237"/>
    </location>
</feature>
<feature type="active site" description="Proton donor" evidence="1">
    <location>
        <position position="254"/>
    </location>
</feature>
<feature type="binding site" evidence="1">
    <location>
        <position position="45"/>
    </location>
    <ligand>
        <name>substrate</name>
    </ligand>
</feature>
<feature type="binding site" evidence="1">
    <location>
        <position position="66"/>
    </location>
    <ligand>
        <name>substrate</name>
    </ligand>
</feature>
<feature type="binding site" evidence="1">
    <location>
        <position position="146"/>
    </location>
    <ligand>
        <name>NAD(+)</name>
        <dbReference type="ChEBI" id="CHEBI:57540"/>
    </ligand>
</feature>
<feature type="binding site" evidence="1">
    <location>
        <position position="175"/>
    </location>
    <ligand>
        <name>NAD(+)</name>
        <dbReference type="ChEBI" id="CHEBI:57540"/>
    </ligand>
</feature>
<feature type="binding site" evidence="1">
    <location>
        <position position="232"/>
    </location>
    <ligand>
        <name>NAD(+)</name>
        <dbReference type="ChEBI" id="CHEBI:57540"/>
    </ligand>
</feature>
<feature type="binding site" evidence="1">
    <location>
        <position position="257"/>
    </location>
    <ligand>
        <name>NAD(+)</name>
        <dbReference type="ChEBI" id="CHEBI:57540"/>
    </ligand>
</feature>
<feature type="binding site" evidence="1">
    <location>
        <position position="258"/>
    </location>
    <ligand>
        <name>substrate</name>
    </ligand>
</feature>
<reference key="1">
    <citation type="submission" date="2008-02" db="EMBL/GenBank/DDBJ databases">
        <title>Complete sequence of Escherichia coli C str. ATCC 8739.</title>
        <authorList>
            <person name="Copeland A."/>
            <person name="Lucas S."/>
            <person name="Lapidus A."/>
            <person name="Glavina del Rio T."/>
            <person name="Dalin E."/>
            <person name="Tice H."/>
            <person name="Bruce D."/>
            <person name="Goodwin L."/>
            <person name="Pitluck S."/>
            <person name="Kiss H."/>
            <person name="Brettin T."/>
            <person name="Detter J.C."/>
            <person name="Han C."/>
            <person name="Kuske C.R."/>
            <person name="Schmutz J."/>
            <person name="Larimer F."/>
            <person name="Land M."/>
            <person name="Hauser L."/>
            <person name="Kyrpides N."/>
            <person name="Mikhailova N."/>
            <person name="Ingram L."/>
            <person name="Richardson P."/>
        </authorList>
    </citation>
    <scope>NUCLEOTIDE SEQUENCE [LARGE SCALE GENOMIC DNA]</scope>
    <source>
        <strain>ATCC 8739 / DSM 1576 / NBRC 3972 / NCIMB 8545 / WDCM 00012 / Crooks</strain>
    </source>
</reference>
<sequence>MKILVDENMPYARDLFSRLGEVTAVPGRPIPVAQLADADALMVRSVTKVNESLLAGKPIKFVGTATAGTDHVDEAWLKQAGIGFSAAPGCNAIAVVEYVFSSLLMLAERDGFSLYDRTVGIVGVGNVGRRLQARLEALGIKTLLCDPPRADRGDEGDFRSLDELVQRADILTFHTPLFKDGPYKTLHLADEKLIRSLKPGAILINACRGAVVDNTALLTCLNEGQKLSVVLDVWEGEPELNVELLKKVDIGTPHIAGYTLEGKARGTTQVFEAYSKFIGHEQHVALDTLLPAPEFGRITLHGPLDQPTLKRLVHLVYDVRRDDAPLRKVAGIPGEFDKLRKNYLERREWSSLYVICDDASAASLLCKLGFNAVHHPAR</sequence>
<proteinExistence type="inferred from homology"/>
<name>PDXB_ECOLC</name>
<accession>B1IXM2</accession>
<evidence type="ECO:0000255" key="1">
    <source>
        <dbReference type="HAMAP-Rule" id="MF_01825"/>
    </source>
</evidence>